<feature type="chain" id="PRO_0000231246" description="UDP-N-acetylglucosamine 1-carboxyvinyltransferase">
    <location>
        <begin position="1"/>
        <end position="419"/>
    </location>
</feature>
<feature type="active site" description="Proton donor" evidence="1">
    <location>
        <position position="116"/>
    </location>
</feature>
<feature type="binding site" evidence="1">
    <location>
        <begin position="22"/>
        <end position="23"/>
    </location>
    <ligand>
        <name>phosphoenolpyruvate</name>
        <dbReference type="ChEBI" id="CHEBI:58702"/>
    </ligand>
</feature>
<feature type="binding site" evidence="1">
    <location>
        <position position="92"/>
    </location>
    <ligand>
        <name>UDP-N-acetyl-alpha-D-glucosamine</name>
        <dbReference type="ChEBI" id="CHEBI:57705"/>
    </ligand>
</feature>
<feature type="binding site" evidence="1">
    <location>
        <position position="306"/>
    </location>
    <ligand>
        <name>UDP-N-acetyl-alpha-D-glucosamine</name>
        <dbReference type="ChEBI" id="CHEBI:57705"/>
    </ligand>
</feature>
<feature type="binding site" evidence="1">
    <location>
        <position position="328"/>
    </location>
    <ligand>
        <name>UDP-N-acetyl-alpha-D-glucosamine</name>
        <dbReference type="ChEBI" id="CHEBI:57705"/>
    </ligand>
</feature>
<feature type="modified residue" description="2-(S-cysteinyl)pyruvic acid O-phosphothioketal" evidence="1">
    <location>
        <position position="116"/>
    </location>
</feature>
<protein>
    <recommendedName>
        <fullName evidence="1">UDP-N-acetylglucosamine 1-carboxyvinyltransferase</fullName>
        <ecNumber evidence="1">2.5.1.7</ecNumber>
    </recommendedName>
    <alternativeName>
        <fullName evidence="1">Enoylpyruvate transferase</fullName>
    </alternativeName>
    <alternativeName>
        <fullName evidence="1">UDP-N-acetylglucosamine enolpyruvyl transferase</fullName>
        <shortName evidence="1">EPT</shortName>
    </alternativeName>
</protein>
<proteinExistence type="inferred from homology"/>
<keyword id="KW-0131">Cell cycle</keyword>
<keyword id="KW-0132">Cell division</keyword>
<keyword id="KW-0133">Cell shape</keyword>
<keyword id="KW-0961">Cell wall biogenesis/degradation</keyword>
<keyword id="KW-0963">Cytoplasm</keyword>
<keyword id="KW-0573">Peptidoglycan synthesis</keyword>
<keyword id="KW-0670">Pyruvate</keyword>
<keyword id="KW-1185">Reference proteome</keyword>
<keyword id="KW-0808">Transferase</keyword>
<accession>Q3IG20</accession>
<gene>
    <name evidence="1" type="primary">murA</name>
    <name type="ordered locus">PSHAa2538</name>
</gene>
<name>MURA_PSET1</name>
<dbReference type="EC" id="2.5.1.7" evidence="1"/>
<dbReference type="EMBL" id="CR954246">
    <property type="protein sequence ID" value="CAI87586.1"/>
    <property type="molecule type" value="Genomic_DNA"/>
</dbReference>
<dbReference type="SMR" id="Q3IG20"/>
<dbReference type="STRING" id="326442.PSHAa2538"/>
<dbReference type="KEGG" id="pha:PSHAa2538"/>
<dbReference type="PATRIC" id="fig|326442.8.peg.2448"/>
<dbReference type="eggNOG" id="COG0766">
    <property type="taxonomic scope" value="Bacteria"/>
</dbReference>
<dbReference type="HOGENOM" id="CLU_027387_0_0_6"/>
<dbReference type="BioCyc" id="PHAL326442:PSHA_RS12495-MONOMER"/>
<dbReference type="UniPathway" id="UPA00219"/>
<dbReference type="Proteomes" id="UP000006843">
    <property type="component" value="Chromosome I"/>
</dbReference>
<dbReference type="GO" id="GO:0005737">
    <property type="term" value="C:cytoplasm"/>
    <property type="evidence" value="ECO:0007669"/>
    <property type="project" value="UniProtKB-SubCell"/>
</dbReference>
<dbReference type="GO" id="GO:0008760">
    <property type="term" value="F:UDP-N-acetylglucosamine 1-carboxyvinyltransferase activity"/>
    <property type="evidence" value="ECO:0007669"/>
    <property type="project" value="UniProtKB-UniRule"/>
</dbReference>
<dbReference type="GO" id="GO:0051301">
    <property type="term" value="P:cell division"/>
    <property type="evidence" value="ECO:0007669"/>
    <property type="project" value="UniProtKB-KW"/>
</dbReference>
<dbReference type="GO" id="GO:0071555">
    <property type="term" value="P:cell wall organization"/>
    <property type="evidence" value="ECO:0007669"/>
    <property type="project" value="UniProtKB-KW"/>
</dbReference>
<dbReference type="GO" id="GO:0009252">
    <property type="term" value="P:peptidoglycan biosynthetic process"/>
    <property type="evidence" value="ECO:0007669"/>
    <property type="project" value="UniProtKB-UniRule"/>
</dbReference>
<dbReference type="GO" id="GO:0008360">
    <property type="term" value="P:regulation of cell shape"/>
    <property type="evidence" value="ECO:0007669"/>
    <property type="project" value="UniProtKB-KW"/>
</dbReference>
<dbReference type="GO" id="GO:0019277">
    <property type="term" value="P:UDP-N-acetylgalactosamine biosynthetic process"/>
    <property type="evidence" value="ECO:0007669"/>
    <property type="project" value="InterPro"/>
</dbReference>
<dbReference type="CDD" id="cd01555">
    <property type="entry name" value="UdpNAET"/>
    <property type="match status" value="1"/>
</dbReference>
<dbReference type="FunFam" id="3.65.10.10:FF:000001">
    <property type="entry name" value="UDP-N-acetylglucosamine 1-carboxyvinyltransferase"/>
    <property type="match status" value="1"/>
</dbReference>
<dbReference type="Gene3D" id="3.65.10.10">
    <property type="entry name" value="Enolpyruvate transferase domain"/>
    <property type="match status" value="2"/>
</dbReference>
<dbReference type="HAMAP" id="MF_00111">
    <property type="entry name" value="MurA"/>
    <property type="match status" value="1"/>
</dbReference>
<dbReference type="InterPro" id="IPR001986">
    <property type="entry name" value="Enolpyruvate_Tfrase_dom"/>
</dbReference>
<dbReference type="InterPro" id="IPR036968">
    <property type="entry name" value="Enolpyruvate_Tfrase_sf"/>
</dbReference>
<dbReference type="InterPro" id="IPR050068">
    <property type="entry name" value="MurA_subfamily"/>
</dbReference>
<dbReference type="InterPro" id="IPR013792">
    <property type="entry name" value="RNA3'P_cycl/enolpyr_Trfase_a/b"/>
</dbReference>
<dbReference type="InterPro" id="IPR005750">
    <property type="entry name" value="UDP_GlcNAc_COvinyl_MurA"/>
</dbReference>
<dbReference type="NCBIfam" id="TIGR01072">
    <property type="entry name" value="murA"/>
    <property type="match status" value="1"/>
</dbReference>
<dbReference type="NCBIfam" id="NF006873">
    <property type="entry name" value="PRK09369.1"/>
    <property type="match status" value="1"/>
</dbReference>
<dbReference type="PANTHER" id="PTHR43783">
    <property type="entry name" value="UDP-N-ACETYLGLUCOSAMINE 1-CARBOXYVINYLTRANSFERASE"/>
    <property type="match status" value="1"/>
</dbReference>
<dbReference type="PANTHER" id="PTHR43783:SF1">
    <property type="entry name" value="UDP-N-ACETYLGLUCOSAMINE 1-CARBOXYVINYLTRANSFERASE"/>
    <property type="match status" value="1"/>
</dbReference>
<dbReference type="Pfam" id="PF00275">
    <property type="entry name" value="EPSP_synthase"/>
    <property type="match status" value="1"/>
</dbReference>
<dbReference type="SUPFAM" id="SSF55205">
    <property type="entry name" value="EPT/RTPC-like"/>
    <property type="match status" value="1"/>
</dbReference>
<organism>
    <name type="scientific">Pseudoalteromonas translucida (strain TAC 125)</name>
    <dbReference type="NCBI Taxonomy" id="326442"/>
    <lineage>
        <taxon>Bacteria</taxon>
        <taxon>Pseudomonadati</taxon>
        <taxon>Pseudomonadota</taxon>
        <taxon>Gammaproteobacteria</taxon>
        <taxon>Alteromonadales</taxon>
        <taxon>Pseudoalteromonadaceae</taxon>
        <taxon>Pseudoalteromonas</taxon>
    </lineage>
</organism>
<comment type="function">
    <text evidence="1">Cell wall formation. Adds enolpyruvyl to UDP-N-acetylglucosamine.</text>
</comment>
<comment type="catalytic activity">
    <reaction evidence="1">
        <text>phosphoenolpyruvate + UDP-N-acetyl-alpha-D-glucosamine = UDP-N-acetyl-3-O-(1-carboxyvinyl)-alpha-D-glucosamine + phosphate</text>
        <dbReference type="Rhea" id="RHEA:18681"/>
        <dbReference type="ChEBI" id="CHEBI:43474"/>
        <dbReference type="ChEBI" id="CHEBI:57705"/>
        <dbReference type="ChEBI" id="CHEBI:58702"/>
        <dbReference type="ChEBI" id="CHEBI:68483"/>
        <dbReference type="EC" id="2.5.1.7"/>
    </reaction>
</comment>
<comment type="pathway">
    <text evidence="1">Cell wall biogenesis; peptidoglycan biosynthesis.</text>
</comment>
<comment type="subcellular location">
    <subcellularLocation>
        <location evidence="1">Cytoplasm</location>
    </subcellularLocation>
</comment>
<comment type="similarity">
    <text evidence="1">Belongs to the EPSP synthase family. MurA subfamily.</text>
</comment>
<evidence type="ECO:0000255" key="1">
    <source>
        <dbReference type="HAMAP-Rule" id="MF_00111"/>
    </source>
</evidence>
<sequence length="419" mass="44624">MDQFVIQGGTSLAGEVTISGAKNAALPILFAALLADGKSTFTNVPRLRDIVTTEALLKTLGASVNWQGDTLVIDGATVDKTLAPYDLVKQMRASVLTLGPLVARFGEAQVSLPGGCAIGARPVDIHIQGLERMGAQINVENGYINAKVNGRLKGAEIFMEMVSVGATENLLMAATLADGKTVLENAACEPEITDLANCLIAMGAKITGAGTNRIEIEGVERLAGCEHRILPDRIETGTFLVAAAMAGGEVLCKMTDFHSLEPVIEKLRATNALLEVHDNSIYLDMRGRELKAVNIKTAPHPGFPTDMQAQFTALNVVANGSATITETIFENRFMHVPELQRMGANIRLEGNTAICGDTKTLSGAQVMATDLRASASLILTGIVAQGETIVDRIYHVDRGYERIEDKLSALGANIKRRSS</sequence>
<reference key="1">
    <citation type="journal article" date="2005" name="Genome Res.">
        <title>Coping with cold: the genome of the versatile marine Antarctica bacterium Pseudoalteromonas haloplanktis TAC125.</title>
        <authorList>
            <person name="Medigue C."/>
            <person name="Krin E."/>
            <person name="Pascal G."/>
            <person name="Barbe V."/>
            <person name="Bernsel A."/>
            <person name="Bertin P.N."/>
            <person name="Cheung F."/>
            <person name="Cruveiller S."/>
            <person name="D'Amico S."/>
            <person name="Duilio A."/>
            <person name="Fang G."/>
            <person name="Feller G."/>
            <person name="Ho C."/>
            <person name="Mangenot S."/>
            <person name="Marino G."/>
            <person name="Nilsson J."/>
            <person name="Parrilli E."/>
            <person name="Rocha E.P.C."/>
            <person name="Rouy Z."/>
            <person name="Sekowska A."/>
            <person name="Tutino M.L."/>
            <person name="Vallenet D."/>
            <person name="von Heijne G."/>
            <person name="Danchin A."/>
        </authorList>
    </citation>
    <scope>NUCLEOTIDE SEQUENCE [LARGE SCALE GENOMIC DNA]</scope>
    <source>
        <strain>TAC 125</strain>
    </source>
</reference>